<gene>
    <name evidence="1" type="primary">argB</name>
    <name type="ordered locus">MAV_3116</name>
</gene>
<keyword id="KW-0028">Amino-acid biosynthesis</keyword>
<keyword id="KW-0055">Arginine biosynthesis</keyword>
<keyword id="KW-0067">ATP-binding</keyword>
<keyword id="KW-0963">Cytoplasm</keyword>
<keyword id="KW-0418">Kinase</keyword>
<keyword id="KW-0547">Nucleotide-binding</keyword>
<keyword id="KW-0808">Transferase</keyword>
<accession>A0QHB2</accession>
<dbReference type="EC" id="2.7.2.8" evidence="1"/>
<dbReference type="EMBL" id="CP000479">
    <property type="protein sequence ID" value="ABK65446.1"/>
    <property type="molecule type" value="Genomic_DNA"/>
</dbReference>
<dbReference type="RefSeq" id="WP_011725268.1">
    <property type="nucleotide sequence ID" value="NC_008595.1"/>
</dbReference>
<dbReference type="SMR" id="A0QHB2"/>
<dbReference type="KEGG" id="mav:MAV_3116"/>
<dbReference type="HOGENOM" id="CLU_053680_0_1_11"/>
<dbReference type="UniPathway" id="UPA00068">
    <property type="reaction ID" value="UER00107"/>
</dbReference>
<dbReference type="Proteomes" id="UP000001574">
    <property type="component" value="Chromosome"/>
</dbReference>
<dbReference type="GO" id="GO:0005737">
    <property type="term" value="C:cytoplasm"/>
    <property type="evidence" value="ECO:0007669"/>
    <property type="project" value="UniProtKB-SubCell"/>
</dbReference>
<dbReference type="GO" id="GO:0003991">
    <property type="term" value="F:acetylglutamate kinase activity"/>
    <property type="evidence" value="ECO:0007669"/>
    <property type="project" value="UniProtKB-UniRule"/>
</dbReference>
<dbReference type="GO" id="GO:0005524">
    <property type="term" value="F:ATP binding"/>
    <property type="evidence" value="ECO:0007669"/>
    <property type="project" value="UniProtKB-UniRule"/>
</dbReference>
<dbReference type="GO" id="GO:0042450">
    <property type="term" value="P:arginine biosynthetic process via ornithine"/>
    <property type="evidence" value="ECO:0007669"/>
    <property type="project" value="UniProtKB-UniRule"/>
</dbReference>
<dbReference type="GO" id="GO:0006526">
    <property type="term" value="P:L-arginine biosynthetic process"/>
    <property type="evidence" value="ECO:0007669"/>
    <property type="project" value="UniProtKB-UniPathway"/>
</dbReference>
<dbReference type="CDD" id="cd04250">
    <property type="entry name" value="AAK_NAGK-C"/>
    <property type="match status" value="1"/>
</dbReference>
<dbReference type="FunFam" id="3.40.1160.10:FF:000004">
    <property type="entry name" value="Acetylglutamate kinase"/>
    <property type="match status" value="1"/>
</dbReference>
<dbReference type="Gene3D" id="3.40.1160.10">
    <property type="entry name" value="Acetylglutamate kinase-like"/>
    <property type="match status" value="1"/>
</dbReference>
<dbReference type="HAMAP" id="MF_00082">
    <property type="entry name" value="ArgB"/>
    <property type="match status" value="1"/>
</dbReference>
<dbReference type="InterPro" id="IPR036393">
    <property type="entry name" value="AceGlu_kinase-like_sf"/>
</dbReference>
<dbReference type="InterPro" id="IPR004662">
    <property type="entry name" value="AcgluKinase_fam"/>
</dbReference>
<dbReference type="InterPro" id="IPR037528">
    <property type="entry name" value="ArgB"/>
</dbReference>
<dbReference type="InterPro" id="IPR001048">
    <property type="entry name" value="Asp/Glu/Uridylate_kinase"/>
</dbReference>
<dbReference type="InterPro" id="IPR001057">
    <property type="entry name" value="Glu/AcGlu_kinase"/>
</dbReference>
<dbReference type="InterPro" id="IPR041727">
    <property type="entry name" value="NAGK-C"/>
</dbReference>
<dbReference type="NCBIfam" id="TIGR00761">
    <property type="entry name" value="argB"/>
    <property type="match status" value="1"/>
</dbReference>
<dbReference type="PANTHER" id="PTHR23342">
    <property type="entry name" value="N-ACETYLGLUTAMATE SYNTHASE"/>
    <property type="match status" value="1"/>
</dbReference>
<dbReference type="PANTHER" id="PTHR23342:SF0">
    <property type="entry name" value="N-ACETYLGLUTAMATE SYNTHASE, MITOCHONDRIAL"/>
    <property type="match status" value="1"/>
</dbReference>
<dbReference type="Pfam" id="PF00696">
    <property type="entry name" value="AA_kinase"/>
    <property type="match status" value="1"/>
</dbReference>
<dbReference type="PIRSF" id="PIRSF000728">
    <property type="entry name" value="NAGK"/>
    <property type="match status" value="1"/>
</dbReference>
<dbReference type="PRINTS" id="PR00474">
    <property type="entry name" value="GLU5KINASE"/>
</dbReference>
<dbReference type="SUPFAM" id="SSF53633">
    <property type="entry name" value="Carbamate kinase-like"/>
    <property type="match status" value="1"/>
</dbReference>
<proteinExistence type="inferred from homology"/>
<reference key="1">
    <citation type="submission" date="2006-10" db="EMBL/GenBank/DDBJ databases">
        <authorList>
            <person name="Fleischmann R.D."/>
            <person name="Dodson R.J."/>
            <person name="Haft D.H."/>
            <person name="Merkel J.S."/>
            <person name="Nelson W.C."/>
            <person name="Fraser C.M."/>
        </authorList>
    </citation>
    <scope>NUCLEOTIDE SEQUENCE [LARGE SCALE GENOMIC DNA]</scope>
    <source>
        <strain>104</strain>
    </source>
</reference>
<protein>
    <recommendedName>
        <fullName evidence="1">Acetylglutamate kinase</fullName>
        <ecNumber evidence="1">2.7.2.8</ecNumber>
    </recommendedName>
    <alternativeName>
        <fullName evidence="1">N-acetyl-L-glutamate 5-phosphotransferase</fullName>
    </alternativeName>
    <alternativeName>
        <fullName evidence="1">NAG kinase</fullName>
        <shortName evidence="1">NAGK</shortName>
    </alternativeName>
</protein>
<name>ARGB_MYCA1</name>
<sequence length="295" mass="30955">MTPSTEALPTAVKAQVLAEALPWLKQLHGKIVVIKYGGNAMTDDTLRRAFAADMAFLRNCGIHPVVVHGGGPQITAMLRRLGIPGDFKGGFRVTTPEVLDVARMVLFGQVGRELVNLINAHGPYAVGITGEDAQLFTAVRRSVTVDGVTTDIGLVGDVERVNAAAVLDLIAARRIPVVSTLAPDAEGVVHNINADTAAAALAEALGAEKLLMLTDVEGLYTSWPNRDSLVSEIDTATLSQLLPTLEAGMIPKVEACLRAVSAGVPSAHVIDGRVEHCVLVELFTDAGTGTKVVSS</sequence>
<organism>
    <name type="scientific">Mycobacterium avium (strain 104)</name>
    <dbReference type="NCBI Taxonomy" id="243243"/>
    <lineage>
        <taxon>Bacteria</taxon>
        <taxon>Bacillati</taxon>
        <taxon>Actinomycetota</taxon>
        <taxon>Actinomycetes</taxon>
        <taxon>Mycobacteriales</taxon>
        <taxon>Mycobacteriaceae</taxon>
        <taxon>Mycobacterium</taxon>
        <taxon>Mycobacterium avium complex (MAC)</taxon>
    </lineage>
</organism>
<evidence type="ECO:0000255" key="1">
    <source>
        <dbReference type="HAMAP-Rule" id="MF_00082"/>
    </source>
</evidence>
<comment type="function">
    <text evidence="1">Catalyzes the ATP-dependent phosphorylation of N-acetyl-L-glutamate.</text>
</comment>
<comment type="catalytic activity">
    <reaction evidence="1">
        <text>N-acetyl-L-glutamate + ATP = N-acetyl-L-glutamyl 5-phosphate + ADP</text>
        <dbReference type="Rhea" id="RHEA:14629"/>
        <dbReference type="ChEBI" id="CHEBI:30616"/>
        <dbReference type="ChEBI" id="CHEBI:44337"/>
        <dbReference type="ChEBI" id="CHEBI:57936"/>
        <dbReference type="ChEBI" id="CHEBI:456216"/>
        <dbReference type="EC" id="2.7.2.8"/>
    </reaction>
</comment>
<comment type="pathway">
    <text evidence="1">Amino-acid biosynthesis; L-arginine biosynthesis; N(2)-acetyl-L-ornithine from L-glutamate: step 2/4.</text>
</comment>
<comment type="subcellular location">
    <subcellularLocation>
        <location evidence="1">Cytoplasm</location>
    </subcellularLocation>
</comment>
<comment type="similarity">
    <text evidence="1">Belongs to the acetylglutamate kinase family. ArgB subfamily.</text>
</comment>
<feature type="chain" id="PRO_1000010511" description="Acetylglutamate kinase">
    <location>
        <begin position="1"/>
        <end position="295"/>
    </location>
</feature>
<feature type="binding site" evidence="1">
    <location>
        <begin position="70"/>
        <end position="71"/>
    </location>
    <ligand>
        <name>substrate</name>
    </ligand>
</feature>
<feature type="binding site" evidence="1">
    <location>
        <position position="92"/>
    </location>
    <ligand>
        <name>substrate</name>
    </ligand>
</feature>
<feature type="binding site" evidence="1">
    <location>
        <position position="191"/>
    </location>
    <ligand>
        <name>substrate</name>
    </ligand>
</feature>
<feature type="site" description="Transition state stabilizer" evidence="1">
    <location>
        <position position="35"/>
    </location>
</feature>
<feature type="site" description="Transition state stabilizer" evidence="1">
    <location>
        <position position="252"/>
    </location>
</feature>